<reference key="1">
    <citation type="journal article" date="1979" name="Hoppe-Seyler's Z. Physiol. Chem.">
        <title>Snake venom. The amino-acid sequence of the subunits of two reduced and S-carboxymethylated proteins (C8S2 and C9S3) from Dendroaspis angusticeps venom.</title>
        <authorList>
            <person name="Joubert F.J."/>
            <person name="Viljoen C.C."/>
        </authorList>
    </citation>
    <scope>PROTEIN SEQUENCE</scope>
    <scope>SUBCELLULAR LOCATION</scope>
    <source>
        <tissue>Venom</tissue>
    </source>
</reference>
<organism>
    <name type="scientific">Dendroaspis angusticeps</name>
    <name type="common">Eastern green mamba</name>
    <name type="synonym">Naja angusticeps</name>
    <dbReference type="NCBI Taxonomy" id="8618"/>
    <lineage>
        <taxon>Eukaryota</taxon>
        <taxon>Metazoa</taxon>
        <taxon>Chordata</taxon>
        <taxon>Craniata</taxon>
        <taxon>Vertebrata</taxon>
        <taxon>Euteleostomi</taxon>
        <taxon>Lepidosauria</taxon>
        <taxon>Squamata</taxon>
        <taxon>Bifurcata</taxon>
        <taxon>Unidentata</taxon>
        <taxon>Episquamata</taxon>
        <taxon>Toxicofera</taxon>
        <taxon>Serpentes</taxon>
        <taxon>Colubroidea</taxon>
        <taxon>Elapidae</taxon>
        <taxon>Elapinae</taxon>
        <taxon>Dendroaspis</taxon>
    </lineage>
</organism>
<feature type="chain" id="PRO_0000093622" description="Synergistic-type venom protein C9S3, chain 2" evidence="2">
    <location>
        <begin position="1"/>
        <end position="63"/>
    </location>
</feature>
<feature type="disulfide bond" evidence="1">
    <location>
        <begin position="3"/>
        <end position="24"/>
    </location>
</feature>
<feature type="disulfide bond" evidence="1">
    <location>
        <begin position="17"/>
        <end position="42"/>
    </location>
</feature>
<feature type="disulfide bond" evidence="1">
    <location>
        <begin position="46"/>
        <end position="57"/>
    </location>
</feature>
<feature type="disulfide bond" description="Interchain" evidence="1">
    <location>
        <position position="54"/>
    </location>
</feature>
<proteinExistence type="evidence at protein level"/>
<accession>P01409</accession>
<dbReference type="PIR" id="B01679">
    <property type="entry name" value="V6EP92"/>
</dbReference>
<dbReference type="SMR" id="P01409"/>
<dbReference type="GO" id="GO:0005576">
    <property type="term" value="C:extracellular region"/>
    <property type="evidence" value="ECO:0007669"/>
    <property type="project" value="UniProtKB-SubCell"/>
</dbReference>
<dbReference type="GO" id="GO:0090729">
    <property type="term" value="F:toxin activity"/>
    <property type="evidence" value="ECO:0007669"/>
    <property type="project" value="UniProtKB-KW"/>
</dbReference>
<dbReference type="CDD" id="cd00206">
    <property type="entry name" value="TFP_snake_toxin"/>
    <property type="match status" value="1"/>
</dbReference>
<dbReference type="Gene3D" id="2.10.60.10">
    <property type="entry name" value="CD59"/>
    <property type="match status" value="1"/>
</dbReference>
<dbReference type="InterPro" id="IPR003571">
    <property type="entry name" value="Snake_3FTx"/>
</dbReference>
<dbReference type="InterPro" id="IPR045860">
    <property type="entry name" value="Snake_toxin-like_sf"/>
</dbReference>
<dbReference type="InterPro" id="IPR018354">
    <property type="entry name" value="Snake_toxin_con_site"/>
</dbReference>
<dbReference type="InterPro" id="IPR054131">
    <property type="entry name" value="Toxin_cobra-type"/>
</dbReference>
<dbReference type="Pfam" id="PF21947">
    <property type="entry name" value="Toxin_cobra-type"/>
    <property type="match status" value="1"/>
</dbReference>
<dbReference type="SUPFAM" id="SSF57302">
    <property type="entry name" value="Snake toxin-like"/>
    <property type="match status" value="1"/>
</dbReference>
<dbReference type="PROSITE" id="PS00272">
    <property type="entry name" value="SNAKE_TOXIN"/>
    <property type="match status" value="1"/>
</dbReference>
<sequence length="63" mass="6738">LTCVTGKSIGGISTEECAAGQKICNKKWTKMGPKLYDVSRGCTATCPKADEYGCVKCCNTDRN</sequence>
<evidence type="ECO:0000250" key="1">
    <source>
        <dbReference type="UniProtKB" id="P0DQP2"/>
    </source>
</evidence>
<evidence type="ECO:0000269" key="2">
    <source>
    </source>
</evidence>
<evidence type="ECO:0000305" key="3"/>
<name>3SIY4_DENAN</name>
<comment type="function">
    <text>This protein shows a synergetic toxic effect in that it enhances the toxicity of other D.angusticeps toxins.</text>
</comment>
<comment type="subunit">
    <text>Heterodimer of C9S3 chain 1 (AC P01408) and chain 2, linked by at least two disulfide bonds.</text>
</comment>
<comment type="subcellular location">
    <subcellularLocation>
        <location evidence="2">Secreted</location>
    </subcellularLocation>
</comment>
<comment type="tissue specificity">
    <text evidence="3">Expressed by the venom gland.</text>
</comment>
<comment type="miscellaneous">
    <text evidence="3">Is classified as a P-type cytotoxin, since a proline residue stands at position 33 (Pro-31 in standard classification).</text>
</comment>
<comment type="similarity">
    <text evidence="3">Belongs to the three-finger toxin family. Short-chain subfamily. Aminergic toxin sub-subfamily.</text>
</comment>
<protein>
    <recommendedName>
        <fullName>Synergistic-type venom protein C9S3, chain 2</fullName>
    </recommendedName>
</protein>
<keyword id="KW-0903">Direct protein sequencing</keyword>
<keyword id="KW-1015">Disulfide bond</keyword>
<keyword id="KW-0964">Secreted</keyword>
<keyword id="KW-0800">Toxin</keyword>